<sequence>MASANFIRQFELGNDSFSYQKRPEDEPSQPLSNRNINKLNDSSTLKDSSSRIFINSQVLRDGRPVELYAVECSGMKYMELSCGDNVALRRCPDSYFNISQILRLAGTSSSENAKELDDIIESGDYENVDSKHPQIDGVWVPYDRAISIAKRYGVYEILQPLISFNLDLFPKFSKQQQIESSSISKNLNTSSFNTRSPLRNHNFSNPSKSSKNGVHTINNMQSSPSPSSSFLLPLTQIDSQNVKRSNNYLSTSPPILEQRLKRHRIDVSDEDLHPSSQLNDNEASSLFPDTPRLNHSLSFVSLVSSLPPLDQNIMQDYHTSKDILTSIFLDVNFADSSALEAKLSDSLDLDVPIDELGHAALHWAAAVAKMPLLQALIHKGANPLRGNLTGETALMRSVLVTNHLNQNSFGDLLDLLYASLPCTDRAGRTVVHHICLTAGIKGRGSASRYYLETLLNWAKKHASGNNGYMLKDFINYLNHQDKNGDTALNIAARIGNKNIVEVLMQAGASAYIPNRAGLSVANFGIFVENALKQPEDSKQTKVSLMSENLSSKEKTAVPPRQKSRDIIASVTDVISSLDKDFQDEMAAKQSMIDSAYTQLRESTKKLSDLREQLHVSETQRTLFLELRQRCKNLMTSIEEQKSELSNLYESFDPNGIHDSLSLDADAPFTVNENNNKNLSIAELKFQVAAYERNEARLNELANKLWQRNSNIKSKCRRVVSLCTGVDESRVDSLLESLLQAVESDGQQGEVDMGRVAGFLRVVKEHQA</sequence>
<gene>
    <name type="primary">cdc10</name>
    <name type="ORF">SPBC336.12c</name>
</gene>
<comment type="function">
    <text evidence="5 7">Major component of the cell cycle transcription factor complex MBF (MCB binding factor, also known as DSC1), that controls G1-S phase specific gene expression. Involved in the control of rRNA production, via interaction with pol5. May be involved in the transcriptional regulation of the cdc22 and cdt1 genes. In fission yeast, two genes, cdc10 and cdc2, are required for the cell cycle control called start, the point early in the G1 phase at which cells become committed to the mitotic cycle.</text>
</comment>
<comment type="subunit">
    <text evidence="5">DSC1 contains cdc10 and sct1/res1. Interacts with pol5.</text>
</comment>
<comment type="interaction">
    <interactant intactId="EBI-1009350">
        <id>P01129</id>
    </interactant>
    <interactant intactId="EBI-1009362">
        <id>O60094</id>
        <label>pol5</label>
    </interactant>
    <organismsDiffer>false</organismsDiffer>
    <experiments>2</experiments>
</comment>
<comment type="interaction">
    <interactant intactId="EBI-1009350">
        <id>P01129</id>
    </interactant>
    <interactant intactId="EBI-1149177">
        <id>P41412</id>
        <label>res2</label>
    </interactant>
    <organismsDiffer>false</organismsDiffer>
    <experiments>3</experiments>
</comment>
<comment type="interaction">
    <interactant intactId="EBI-1009350">
        <id>P01129</id>
    </interactant>
    <interactant intactId="EBI-8530485">
        <id>P40923</id>
        <label>yox1</label>
    </interactant>
    <organismsDiffer>false</organismsDiffer>
    <experiments>4</experiments>
</comment>
<comment type="subcellular location">
    <subcellularLocation>
        <location evidence="2 4">Nucleus</location>
    </subcellularLocation>
</comment>
<reference key="1">
    <citation type="journal article" date="1985" name="EMBO J.">
        <title>Cloning, sequencing and transcriptional control of the Schizosaccharomyces pombe cdc10 'start' gene.</title>
        <authorList>
            <person name="Aves S.J."/>
            <person name="Durkacz B.W."/>
            <person name="Carr A."/>
            <person name="Nurse P."/>
        </authorList>
    </citation>
    <scope>NUCLEOTIDE SEQUENCE [GENOMIC DNA]</scope>
</reference>
<reference key="2">
    <citation type="journal article" date="2002" name="Nature">
        <title>The genome sequence of Schizosaccharomyces pombe.</title>
        <authorList>
            <person name="Wood V."/>
            <person name="Gwilliam R."/>
            <person name="Rajandream M.A."/>
            <person name="Lyne M.H."/>
            <person name="Lyne R."/>
            <person name="Stewart A."/>
            <person name="Sgouros J.G."/>
            <person name="Peat N."/>
            <person name="Hayles J."/>
            <person name="Baker S.G."/>
            <person name="Basham D."/>
            <person name="Bowman S."/>
            <person name="Brooks K."/>
            <person name="Brown D."/>
            <person name="Brown S."/>
            <person name="Chillingworth T."/>
            <person name="Churcher C.M."/>
            <person name="Collins M."/>
            <person name="Connor R."/>
            <person name="Cronin A."/>
            <person name="Davis P."/>
            <person name="Feltwell T."/>
            <person name="Fraser A."/>
            <person name="Gentles S."/>
            <person name="Goble A."/>
            <person name="Hamlin N."/>
            <person name="Harris D.E."/>
            <person name="Hidalgo J."/>
            <person name="Hodgson G."/>
            <person name="Holroyd S."/>
            <person name="Hornsby T."/>
            <person name="Howarth S."/>
            <person name="Huckle E.J."/>
            <person name="Hunt S."/>
            <person name="Jagels K."/>
            <person name="James K.D."/>
            <person name="Jones L."/>
            <person name="Jones M."/>
            <person name="Leather S."/>
            <person name="McDonald S."/>
            <person name="McLean J."/>
            <person name="Mooney P."/>
            <person name="Moule S."/>
            <person name="Mungall K.L."/>
            <person name="Murphy L.D."/>
            <person name="Niblett D."/>
            <person name="Odell C."/>
            <person name="Oliver K."/>
            <person name="O'Neil S."/>
            <person name="Pearson D."/>
            <person name="Quail M.A."/>
            <person name="Rabbinowitsch E."/>
            <person name="Rutherford K.M."/>
            <person name="Rutter S."/>
            <person name="Saunders D."/>
            <person name="Seeger K."/>
            <person name="Sharp S."/>
            <person name="Skelton J."/>
            <person name="Simmonds M.N."/>
            <person name="Squares R."/>
            <person name="Squares S."/>
            <person name="Stevens K."/>
            <person name="Taylor K."/>
            <person name="Taylor R.G."/>
            <person name="Tivey A."/>
            <person name="Walsh S.V."/>
            <person name="Warren T."/>
            <person name="Whitehead S."/>
            <person name="Woodward J.R."/>
            <person name="Volckaert G."/>
            <person name="Aert R."/>
            <person name="Robben J."/>
            <person name="Grymonprez B."/>
            <person name="Weltjens I."/>
            <person name="Vanstreels E."/>
            <person name="Rieger M."/>
            <person name="Schaefer M."/>
            <person name="Mueller-Auer S."/>
            <person name="Gabel C."/>
            <person name="Fuchs M."/>
            <person name="Duesterhoeft A."/>
            <person name="Fritzc C."/>
            <person name="Holzer E."/>
            <person name="Moestl D."/>
            <person name="Hilbert H."/>
            <person name="Borzym K."/>
            <person name="Langer I."/>
            <person name="Beck A."/>
            <person name="Lehrach H."/>
            <person name="Reinhardt R."/>
            <person name="Pohl T.M."/>
            <person name="Eger P."/>
            <person name="Zimmermann W."/>
            <person name="Wedler H."/>
            <person name="Wambutt R."/>
            <person name="Purnelle B."/>
            <person name="Goffeau A."/>
            <person name="Cadieu E."/>
            <person name="Dreano S."/>
            <person name="Gloux S."/>
            <person name="Lelaure V."/>
            <person name="Mottier S."/>
            <person name="Galibert F."/>
            <person name="Aves S.J."/>
            <person name="Xiang Z."/>
            <person name="Hunt C."/>
            <person name="Moore K."/>
            <person name="Hurst S.M."/>
            <person name="Lucas M."/>
            <person name="Rochet M."/>
            <person name="Gaillardin C."/>
            <person name="Tallada V.A."/>
            <person name="Garzon A."/>
            <person name="Thode G."/>
            <person name="Daga R.R."/>
            <person name="Cruzado L."/>
            <person name="Jimenez J."/>
            <person name="Sanchez M."/>
            <person name="del Rey F."/>
            <person name="Benito J."/>
            <person name="Dominguez A."/>
            <person name="Revuelta J.L."/>
            <person name="Moreno S."/>
            <person name="Armstrong J."/>
            <person name="Forsburg S.L."/>
            <person name="Cerutti L."/>
            <person name="Lowe T."/>
            <person name="McCombie W.R."/>
            <person name="Paulsen I."/>
            <person name="Potashkin J."/>
            <person name="Shpakovski G.V."/>
            <person name="Ussery D."/>
            <person name="Barrell B.G."/>
            <person name="Nurse P."/>
        </authorList>
    </citation>
    <scope>NUCLEOTIDE SEQUENCE [LARGE SCALE GENOMIC DNA]</scope>
    <source>
        <strain>972 / ATCC 24843</strain>
    </source>
</reference>
<reference key="3">
    <citation type="journal article" date="2000" name="Genes Cells">
        <title>Large-scale screening of intracellular protein localization in living fission yeast cells by the use of a GFP-fusion genomic DNA library.</title>
        <authorList>
            <person name="Ding D.-Q."/>
            <person name="Tomita Y."/>
            <person name="Yamamoto A."/>
            <person name="Chikashige Y."/>
            <person name="Haraguchi T."/>
            <person name="Hiraoka Y."/>
        </authorList>
    </citation>
    <scope>NUCLEOTIDE SEQUENCE [LARGE SCALE GENOMIC DNA] OF 76-310</scope>
    <scope>SUBCELLULAR LOCATION</scope>
    <source>
        <strain>ATCC 38364 / 968</strain>
    </source>
</reference>
<reference key="4">
    <citation type="journal article" date="1995" name="Nucleic Acids Res.">
        <title>Positive and negative roles for cdc10 in cell cycle gene expression.</title>
        <authorList>
            <person name="McInerny C.J."/>
            <person name="Kersey P.J."/>
            <person name="Creanor J."/>
            <person name="Fantes P.A."/>
        </authorList>
    </citation>
    <scope>FUNCTION</scope>
</reference>
<reference key="5">
    <citation type="journal article" date="2006" name="Mol. Genet. Genomics">
        <title>Pol5p, a novel binding partner to Cdc10p in fission yeast involved in rRNA production.</title>
        <authorList>
            <person name="Nadeem F.K."/>
            <person name="Blair D."/>
            <person name="McInerny C.J."/>
        </authorList>
    </citation>
    <scope>FUNCTION</scope>
    <scope>INTERACTION WITH POL5</scope>
</reference>
<reference key="6">
    <citation type="journal article" date="2008" name="J. Proteome Res.">
        <title>Phosphoproteome analysis of fission yeast.</title>
        <authorList>
            <person name="Wilson-Grady J.T."/>
            <person name="Villen J."/>
            <person name="Gygi S.P."/>
        </authorList>
    </citation>
    <scope>PHOSPHORYLATION [LARGE SCALE ANALYSIS] AT SER-252</scope>
    <scope>IDENTIFICATION BY MASS SPECTROMETRY</scope>
</reference>
<feature type="chain" id="PRO_0000067060" description="Start control protein cdc10">
    <location>
        <begin position="1"/>
        <end position="767"/>
    </location>
</feature>
<feature type="domain" description="HTH APSES-type" evidence="2">
    <location>
        <begin position="66"/>
        <end position="173"/>
    </location>
</feature>
<feature type="repeat" description="ANK 1">
    <location>
        <begin position="356"/>
        <end position="385"/>
    </location>
</feature>
<feature type="repeat" description="ANK 2">
    <location>
        <begin position="483"/>
        <end position="512"/>
    </location>
</feature>
<feature type="DNA-binding region" description="H-T-H motif" evidence="2">
    <location>
        <begin position="98"/>
        <end position="119"/>
    </location>
</feature>
<feature type="region of interest" description="Disordered" evidence="3">
    <location>
        <begin position="17"/>
        <end position="44"/>
    </location>
</feature>
<feature type="region of interest" description="Disordered" evidence="3">
    <location>
        <begin position="189"/>
        <end position="230"/>
    </location>
</feature>
<feature type="region of interest" description="Disordered" evidence="3">
    <location>
        <begin position="542"/>
        <end position="562"/>
    </location>
</feature>
<feature type="short sequence motif" description="Nuclear localization signal" evidence="1">
    <location>
        <begin position="261"/>
        <end position="264"/>
    </location>
</feature>
<feature type="compositionally biased region" description="Polar residues" evidence="3">
    <location>
        <begin position="29"/>
        <end position="44"/>
    </location>
</feature>
<feature type="compositionally biased region" description="Polar residues" evidence="3">
    <location>
        <begin position="192"/>
        <end position="221"/>
    </location>
</feature>
<feature type="modified residue" description="Phosphoserine" evidence="6">
    <location>
        <position position="252"/>
    </location>
</feature>
<keyword id="KW-0040">ANK repeat</keyword>
<keyword id="KW-0131">Cell cycle</keyword>
<keyword id="KW-0132">Cell division</keyword>
<keyword id="KW-0498">Mitosis</keyword>
<keyword id="KW-0539">Nucleus</keyword>
<keyword id="KW-0597">Phosphoprotein</keyword>
<keyword id="KW-1185">Reference proteome</keyword>
<keyword id="KW-0677">Repeat</keyword>
<name>CDC10_SCHPO</name>
<evidence type="ECO:0000255" key="1"/>
<evidence type="ECO:0000255" key="2">
    <source>
        <dbReference type="PROSITE-ProRule" id="PRU00630"/>
    </source>
</evidence>
<evidence type="ECO:0000256" key="3">
    <source>
        <dbReference type="SAM" id="MobiDB-lite"/>
    </source>
</evidence>
<evidence type="ECO:0000269" key="4">
    <source>
    </source>
</evidence>
<evidence type="ECO:0000269" key="5">
    <source>
    </source>
</evidence>
<evidence type="ECO:0000269" key="6">
    <source>
    </source>
</evidence>
<evidence type="ECO:0000269" key="7">
    <source>
    </source>
</evidence>
<proteinExistence type="evidence at protein level"/>
<dbReference type="EMBL" id="X02175">
    <property type="protein sequence ID" value="CAA26116.1"/>
    <property type="molecule type" value="Genomic_DNA"/>
</dbReference>
<dbReference type="EMBL" id="CU329671">
    <property type="protein sequence ID" value="CAB58164.1"/>
    <property type="molecule type" value="Genomic_DNA"/>
</dbReference>
<dbReference type="EMBL" id="AB027889">
    <property type="protein sequence ID" value="BAA87193.1"/>
    <property type="molecule type" value="Genomic_DNA"/>
</dbReference>
<dbReference type="PIR" id="A01382">
    <property type="entry name" value="COZPCD"/>
</dbReference>
<dbReference type="RefSeq" id="NP_596132.1">
    <property type="nucleotide sequence ID" value="NM_001022050.2"/>
</dbReference>
<dbReference type="SMR" id="P01129"/>
<dbReference type="BioGRID" id="276766">
    <property type="interactions" value="71"/>
</dbReference>
<dbReference type="DIP" id="DIP-353N"/>
<dbReference type="FunCoup" id="P01129">
    <property type="interactions" value="233"/>
</dbReference>
<dbReference type="IntAct" id="P01129">
    <property type="interactions" value="5"/>
</dbReference>
<dbReference type="MINT" id="P01129"/>
<dbReference type="STRING" id="284812.P01129"/>
<dbReference type="iPTMnet" id="P01129"/>
<dbReference type="PaxDb" id="4896-SPBC336.12c.1"/>
<dbReference type="EnsemblFungi" id="SPBC336.12c.1">
    <property type="protein sequence ID" value="SPBC336.12c.1:pep"/>
    <property type="gene ID" value="SPBC336.12c"/>
</dbReference>
<dbReference type="GeneID" id="2540234"/>
<dbReference type="KEGG" id="spo:2540234"/>
<dbReference type="PomBase" id="SPBC336.12c">
    <property type="gene designation" value="cdc10"/>
</dbReference>
<dbReference type="VEuPathDB" id="FungiDB:SPBC336.12c"/>
<dbReference type="eggNOG" id="ENOG502QPWC">
    <property type="taxonomic scope" value="Eukaryota"/>
</dbReference>
<dbReference type="HOGENOM" id="CLU_009666_1_1_1"/>
<dbReference type="InParanoid" id="P01129"/>
<dbReference type="OMA" id="WIPYDKA"/>
<dbReference type="PhylomeDB" id="P01129"/>
<dbReference type="PRO" id="PR:P01129"/>
<dbReference type="Proteomes" id="UP000002485">
    <property type="component" value="Chromosome II"/>
</dbReference>
<dbReference type="GO" id="GO:0000785">
    <property type="term" value="C:chromatin"/>
    <property type="evidence" value="ECO:0000314"/>
    <property type="project" value="PomBase"/>
</dbReference>
<dbReference type="GO" id="GO:0005737">
    <property type="term" value="C:cytoplasm"/>
    <property type="evidence" value="ECO:0007005"/>
    <property type="project" value="PomBase"/>
</dbReference>
<dbReference type="GO" id="GO:0030907">
    <property type="term" value="C:MBF transcription complex"/>
    <property type="evidence" value="ECO:0000314"/>
    <property type="project" value="PomBase"/>
</dbReference>
<dbReference type="GO" id="GO:0005634">
    <property type="term" value="C:nucleus"/>
    <property type="evidence" value="ECO:0000269"/>
    <property type="project" value="PomBase"/>
</dbReference>
<dbReference type="GO" id="GO:0001228">
    <property type="term" value="F:DNA-binding transcription activator activity, RNA polymerase II-specific"/>
    <property type="evidence" value="ECO:0000315"/>
    <property type="project" value="PomBase"/>
</dbReference>
<dbReference type="GO" id="GO:1990841">
    <property type="term" value="F:promoter-specific chromatin binding"/>
    <property type="evidence" value="ECO:0000269"/>
    <property type="project" value="PomBase"/>
</dbReference>
<dbReference type="GO" id="GO:0000978">
    <property type="term" value="F:RNA polymerase II cis-regulatory region sequence-specific DNA binding"/>
    <property type="evidence" value="ECO:0000314"/>
    <property type="project" value="PomBase"/>
</dbReference>
<dbReference type="GO" id="GO:0051301">
    <property type="term" value="P:cell division"/>
    <property type="evidence" value="ECO:0007669"/>
    <property type="project" value="UniProtKB-KW"/>
</dbReference>
<dbReference type="GO" id="GO:0045892">
    <property type="term" value="P:negative regulation of DNA-templated transcription"/>
    <property type="evidence" value="ECO:0000314"/>
    <property type="project" value="UniProtKB"/>
</dbReference>
<dbReference type="GO" id="GO:0045893">
    <property type="term" value="P:positive regulation of DNA-templated transcription"/>
    <property type="evidence" value="ECO:0000314"/>
    <property type="project" value="UniProtKB"/>
</dbReference>
<dbReference type="GO" id="GO:1900087">
    <property type="term" value="P:positive regulation of G1/S transition of mitotic cell cycle"/>
    <property type="evidence" value="ECO:0000315"/>
    <property type="project" value="PomBase"/>
</dbReference>
<dbReference type="GO" id="GO:0045944">
    <property type="term" value="P:positive regulation of transcription by RNA polymerase II"/>
    <property type="evidence" value="ECO:0000315"/>
    <property type="project" value="PomBase"/>
</dbReference>
<dbReference type="GO" id="GO:0006357">
    <property type="term" value="P:regulation of transcription by RNA polymerase II"/>
    <property type="evidence" value="ECO:0000269"/>
    <property type="project" value="PomBase"/>
</dbReference>
<dbReference type="GO" id="GO:0009303">
    <property type="term" value="P:rRNA transcription"/>
    <property type="evidence" value="ECO:0000314"/>
    <property type="project" value="UniProtKB"/>
</dbReference>
<dbReference type="Gene3D" id="1.25.40.20">
    <property type="entry name" value="Ankyrin repeat-containing domain"/>
    <property type="match status" value="1"/>
</dbReference>
<dbReference type="Gene3D" id="3.10.260.10">
    <property type="entry name" value="Transcription regulator HTH, APSES-type DNA-binding domain"/>
    <property type="match status" value="1"/>
</dbReference>
<dbReference type="InterPro" id="IPR002110">
    <property type="entry name" value="Ankyrin_rpt"/>
</dbReference>
<dbReference type="InterPro" id="IPR036770">
    <property type="entry name" value="Ankyrin_rpt-contain_sf"/>
</dbReference>
<dbReference type="InterPro" id="IPR036887">
    <property type="entry name" value="HTH_APSES_sf"/>
</dbReference>
<dbReference type="InterPro" id="IPR018004">
    <property type="entry name" value="KilA/APSES_HTH"/>
</dbReference>
<dbReference type="InterPro" id="IPR051642">
    <property type="entry name" value="SWI6-like"/>
</dbReference>
<dbReference type="InterPro" id="IPR003163">
    <property type="entry name" value="Tscrpt_reg_HTH_APSES-type"/>
</dbReference>
<dbReference type="PANTHER" id="PTHR43828">
    <property type="entry name" value="ASPARAGINASE"/>
    <property type="match status" value="1"/>
</dbReference>
<dbReference type="PANTHER" id="PTHR43828:SF3">
    <property type="entry name" value="CHROMO DOMAIN-CONTAINING PROTEIN"/>
    <property type="match status" value="1"/>
</dbReference>
<dbReference type="Pfam" id="PF00023">
    <property type="entry name" value="Ank"/>
    <property type="match status" value="1"/>
</dbReference>
<dbReference type="Pfam" id="PF04383">
    <property type="entry name" value="KilA-N"/>
    <property type="match status" value="1"/>
</dbReference>
<dbReference type="SMART" id="SM00248">
    <property type="entry name" value="ANK"/>
    <property type="match status" value="2"/>
</dbReference>
<dbReference type="SMART" id="SM01252">
    <property type="entry name" value="KilA-N"/>
    <property type="match status" value="1"/>
</dbReference>
<dbReference type="SUPFAM" id="SSF48403">
    <property type="entry name" value="Ankyrin repeat"/>
    <property type="match status" value="1"/>
</dbReference>
<dbReference type="SUPFAM" id="SSF54616">
    <property type="entry name" value="DNA-binding domain of Mlu1-box binding protein MBP1"/>
    <property type="match status" value="1"/>
</dbReference>
<dbReference type="PROSITE" id="PS50297">
    <property type="entry name" value="ANK_REP_REGION"/>
    <property type="match status" value="1"/>
</dbReference>
<dbReference type="PROSITE" id="PS50088">
    <property type="entry name" value="ANK_REPEAT"/>
    <property type="match status" value="2"/>
</dbReference>
<dbReference type="PROSITE" id="PS51299">
    <property type="entry name" value="HTH_APSES"/>
    <property type="match status" value="1"/>
</dbReference>
<accession>P01129</accession>
<accession>Q9UU04</accession>
<protein>
    <recommendedName>
        <fullName>Start control protein cdc10</fullName>
    </recommendedName>
</protein>
<organism>
    <name type="scientific">Schizosaccharomyces pombe (strain 972 / ATCC 24843)</name>
    <name type="common">Fission yeast</name>
    <dbReference type="NCBI Taxonomy" id="284812"/>
    <lineage>
        <taxon>Eukaryota</taxon>
        <taxon>Fungi</taxon>
        <taxon>Dikarya</taxon>
        <taxon>Ascomycota</taxon>
        <taxon>Taphrinomycotina</taxon>
        <taxon>Schizosaccharomycetes</taxon>
        <taxon>Schizosaccharomycetales</taxon>
        <taxon>Schizosaccharomycetaceae</taxon>
        <taxon>Schizosaccharomyces</taxon>
    </lineage>
</organism>